<dbReference type="EMBL" id="D89546">
    <property type="protein sequence ID" value="BAA13972.1"/>
    <property type="molecule type" value="mRNA"/>
</dbReference>
<dbReference type="RefSeq" id="NP_999501.1">
    <property type="nucleotide sequence ID" value="NM_214336.1"/>
</dbReference>
<dbReference type="RefSeq" id="XP_013841040.1">
    <property type="nucleotide sequence ID" value="XM_013985586.2"/>
</dbReference>
<dbReference type="SMR" id="P79281"/>
<dbReference type="FunCoup" id="P79281">
    <property type="interactions" value="300"/>
</dbReference>
<dbReference type="STRING" id="9823.ENSSSCP00000040565"/>
<dbReference type="PaxDb" id="9823-ENSSSCP00000017506"/>
<dbReference type="Ensembl" id="ENSSSCT00000017990.6">
    <property type="protein sequence ID" value="ENSSSCP00000017506.2"/>
    <property type="gene ID" value="ENSSSCG00000016522.6"/>
</dbReference>
<dbReference type="Ensembl" id="ENSSSCT00015103764.1">
    <property type="protein sequence ID" value="ENSSSCP00015043326.1"/>
    <property type="gene ID" value="ENSSSCG00015076742.1"/>
</dbReference>
<dbReference type="Ensembl" id="ENSSSCT00025012986.1">
    <property type="protein sequence ID" value="ENSSSCP00025005098.1"/>
    <property type="gene ID" value="ENSSSCG00025009799.1"/>
</dbReference>
<dbReference type="Ensembl" id="ENSSSCT00035018199.1">
    <property type="protein sequence ID" value="ENSSSCP00035006336.1"/>
    <property type="gene ID" value="ENSSSCG00035014369.1"/>
</dbReference>
<dbReference type="Ensembl" id="ENSSSCT00045039627.1">
    <property type="protein sequence ID" value="ENSSSCP00045027585.1"/>
    <property type="gene ID" value="ENSSSCG00045023122.1"/>
</dbReference>
<dbReference type="Ensembl" id="ENSSSCT00045039661.1">
    <property type="protein sequence ID" value="ENSSSCP00045027609.1"/>
    <property type="gene ID" value="ENSSSCG00045023122.1"/>
</dbReference>
<dbReference type="Ensembl" id="ENSSSCT00055055972.1">
    <property type="protein sequence ID" value="ENSSSCP00055044698.1"/>
    <property type="gene ID" value="ENSSSCG00055028221.1"/>
</dbReference>
<dbReference type="Ensembl" id="ENSSSCT00065006326.1">
    <property type="protein sequence ID" value="ENSSSCP00065002824.1"/>
    <property type="gene ID" value="ENSSSCG00065004603.1"/>
</dbReference>
<dbReference type="Ensembl" id="ENSSSCT00070051178.1">
    <property type="protein sequence ID" value="ENSSSCP00070043291.1"/>
    <property type="gene ID" value="ENSSSCG00070025592.1"/>
</dbReference>
<dbReference type="Ensembl" id="ENSSSCT00115025409">
    <property type="protein sequence ID" value="ENSSSCP00115024075"/>
    <property type="gene ID" value="ENSSSCG00115014652"/>
</dbReference>
<dbReference type="GeneID" id="397609"/>
<dbReference type="KEGG" id="ssc:397609"/>
<dbReference type="CTD" id="5764"/>
<dbReference type="VGNC" id="VGNC:91965">
    <property type="gene designation" value="PTN"/>
</dbReference>
<dbReference type="eggNOG" id="ENOG502RXV7">
    <property type="taxonomic scope" value="Eukaryota"/>
</dbReference>
<dbReference type="GeneTree" id="ENSGT00390000007640"/>
<dbReference type="HOGENOM" id="CLU_136864_1_0_1"/>
<dbReference type="InParanoid" id="P79281"/>
<dbReference type="OMA" id="MNGLKQW"/>
<dbReference type="OrthoDB" id="8818336at2759"/>
<dbReference type="TreeFam" id="TF332376"/>
<dbReference type="Reactome" id="R-SSC-201556">
    <property type="pathway name" value="Signaling by ALK"/>
</dbReference>
<dbReference type="Reactome" id="R-SSC-9851151">
    <property type="pathway name" value="MDK and PTN in ALK signaling"/>
</dbReference>
<dbReference type="Proteomes" id="UP000008227">
    <property type="component" value="Chromosome 18"/>
</dbReference>
<dbReference type="Proteomes" id="UP000314985">
    <property type="component" value="Chromosome 18"/>
</dbReference>
<dbReference type="Proteomes" id="UP000694570">
    <property type="component" value="Unplaced"/>
</dbReference>
<dbReference type="Proteomes" id="UP000694571">
    <property type="component" value="Unplaced"/>
</dbReference>
<dbReference type="Proteomes" id="UP000694720">
    <property type="component" value="Unplaced"/>
</dbReference>
<dbReference type="Proteomes" id="UP000694722">
    <property type="component" value="Unplaced"/>
</dbReference>
<dbReference type="Proteomes" id="UP000694723">
    <property type="component" value="Unplaced"/>
</dbReference>
<dbReference type="Proteomes" id="UP000694724">
    <property type="component" value="Unplaced"/>
</dbReference>
<dbReference type="Proteomes" id="UP000694725">
    <property type="component" value="Unplaced"/>
</dbReference>
<dbReference type="Proteomes" id="UP000694726">
    <property type="component" value="Unplaced"/>
</dbReference>
<dbReference type="Proteomes" id="UP000694727">
    <property type="component" value="Unplaced"/>
</dbReference>
<dbReference type="Proteomes" id="UP000694728">
    <property type="component" value="Unplaced"/>
</dbReference>
<dbReference type="Bgee" id="ENSSSCG00000016522">
    <property type="expression patterns" value="Expressed in Ammon's horn and 40 other cell types or tissues"/>
</dbReference>
<dbReference type="ExpressionAtlas" id="P79281">
    <property type="expression patterns" value="baseline and differential"/>
</dbReference>
<dbReference type="GO" id="GO:0005783">
    <property type="term" value="C:endoplasmic reticulum"/>
    <property type="evidence" value="ECO:0007669"/>
    <property type="project" value="Ensembl"/>
</dbReference>
<dbReference type="GO" id="GO:0005576">
    <property type="term" value="C:extracellular region"/>
    <property type="evidence" value="ECO:0000250"/>
    <property type="project" value="UniProtKB"/>
</dbReference>
<dbReference type="GO" id="GO:0005615">
    <property type="term" value="C:extracellular space"/>
    <property type="evidence" value="ECO:0000250"/>
    <property type="project" value="UniProtKB"/>
</dbReference>
<dbReference type="GO" id="GO:0005886">
    <property type="term" value="C:plasma membrane"/>
    <property type="evidence" value="ECO:0007669"/>
    <property type="project" value="GOC"/>
</dbReference>
<dbReference type="GO" id="GO:0032991">
    <property type="term" value="C:protein-containing complex"/>
    <property type="evidence" value="ECO:0007669"/>
    <property type="project" value="Ensembl"/>
</dbReference>
<dbReference type="GO" id="GO:0098685">
    <property type="term" value="C:Schaffer collateral - CA1 synapse"/>
    <property type="evidence" value="ECO:0007669"/>
    <property type="project" value="Ensembl"/>
</dbReference>
<dbReference type="GO" id="GO:0035374">
    <property type="term" value="F:chondroitin sulfate binding"/>
    <property type="evidence" value="ECO:0000250"/>
    <property type="project" value="UniProtKB"/>
</dbReference>
<dbReference type="GO" id="GO:0008083">
    <property type="term" value="F:growth factor activity"/>
    <property type="evidence" value="ECO:0000250"/>
    <property type="project" value="UniProtKB"/>
</dbReference>
<dbReference type="GO" id="GO:0008201">
    <property type="term" value="F:heparin binding"/>
    <property type="evidence" value="ECO:0000250"/>
    <property type="project" value="UniProtKB"/>
</dbReference>
<dbReference type="GO" id="GO:0005178">
    <property type="term" value="F:integrin binding"/>
    <property type="evidence" value="ECO:0007669"/>
    <property type="project" value="Ensembl"/>
</dbReference>
<dbReference type="GO" id="GO:0019901">
    <property type="term" value="F:protein kinase binding"/>
    <property type="evidence" value="ECO:0007669"/>
    <property type="project" value="Ensembl"/>
</dbReference>
<dbReference type="GO" id="GO:0004864">
    <property type="term" value="F:protein phosphatase inhibitor activity"/>
    <property type="evidence" value="ECO:0000250"/>
    <property type="project" value="UniProtKB"/>
</dbReference>
<dbReference type="GO" id="GO:0030282">
    <property type="term" value="P:bone mineralization"/>
    <property type="evidence" value="ECO:0007669"/>
    <property type="project" value="Ensembl"/>
</dbReference>
<dbReference type="GO" id="GO:0046697">
    <property type="term" value="P:decidualization"/>
    <property type="evidence" value="ECO:0000250"/>
    <property type="project" value="UniProtKB"/>
</dbReference>
<dbReference type="GO" id="GO:0140059">
    <property type="term" value="P:dendrite arborization"/>
    <property type="evidence" value="ECO:0000250"/>
    <property type="project" value="UniProtKB"/>
</dbReference>
<dbReference type="GO" id="GO:0031104">
    <property type="term" value="P:dendrite regeneration"/>
    <property type="evidence" value="ECO:0000250"/>
    <property type="project" value="UniProtKB"/>
</dbReference>
<dbReference type="GO" id="GO:0044849">
    <property type="term" value="P:estrous cycle"/>
    <property type="evidence" value="ECO:0000250"/>
    <property type="project" value="UniProtKB"/>
</dbReference>
<dbReference type="GO" id="GO:0007229">
    <property type="term" value="P:integrin-mediated signaling pathway"/>
    <property type="evidence" value="ECO:0000250"/>
    <property type="project" value="UniProtKB"/>
</dbReference>
<dbReference type="GO" id="GO:0007612">
    <property type="term" value="P:learning"/>
    <property type="evidence" value="ECO:0000250"/>
    <property type="project" value="UniProtKB"/>
</dbReference>
<dbReference type="GO" id="GO:0002232">
    <property type="term" value="P:leukocyte chemotaxis involved in inflammatory response"/>
    <property type="evidence" value="ECO:0000250"/>
    <property type="project" value="UniProtKB"/>
</dbReference>
<dbReference type="GO" id="GO:0007613">
    <property type="term" value="P:memory"/>
    <property type="evidence" value="ECO:0000250"/>
    <property type="project" value="UniProtKB"/>
</dbReference>
<dbReference type="GO" id="GO:1900272">
    <property type="term" value="P:negative regulation of long-term synaptic potentiation"/>
    <property type="evidence" value="ECO:0000250"/>
    <property type="project" value="UniProtKB"/>
</dbReference>
<dbReference type="GO" id="GO:0007406">
    <property type="term" value="P:negative regulation of neuroblast proliferation"/>
    <property type="evidence" value="ECO:0000250"/>
    <property type="project" value="UniProtKB"/>
</dbReference>
<dbReference type="GO" id="GO:0048477">
    <property type="term" value="P:oogenesis"/>
    <property type="evidence" value="ECO:0000250"/>
    <property type="project" value="UniProtKB"/>
</dbReference>
<dbReference type="GO" id="GO:0043932">
    <property type="term" value="P:ossification involved in bone remodeling"/>
    <property type="evidence" value="ECO:0000250"/>
    <property type="project" value="UniProtKB"/>
</dbReference>
<dbReference type="GO" id="GO:0048680">
    <property type="term" value="P:positive regulation of axon regeneration"/>
    <property type="evidence" value="ECO:0000250"/>
    <property type="project" value="UniProtKB"/>
</dbReference>
<dbReference type="GO" id="GO:0030501">
    <property type="term" value="P:positive regulation of bone mineralization"/>
    <property type="evidence" value="ECO:0000250"/>
    <property type="project" value="UniProtKB"/>
</dbReference>
<dbReference type="GO" id="GO:0045597">
    <property type="term" value="P:positive regulation of cell differentiation"/>
    <property type="evidence" value="ECO:0000250"/>
    <property type="project" value="UniProtKB"/>
</dbReference>
<dbReference type="GO" id="GO:0051781">
    <property type="term" value="P:positive regulation of cell division"/>
    <property type="evidence" value="ECO:0007669"/>
    <property type="project" value="UniProtKB-KW"/>
</dbReference>
<dbReference type="GO" id="GO:0008284">
    <property type="term" value="P:positive regulation of cell population proliferation"/>
    <property type="evidence" value="ECO:0000250"/>
    <property type="project" value="UniProtKB"/>
</dbReference>
<dbReference type="GO" id="GO:1900006">
    <property type="term" value="P:positive regulation of dendrite development"/>
    <property type="evidence" value="ECO:0000250"/>
    <property type="project" value="UniProtKB"/>
</dbReference>
<dbReference type="GO" id="GO:2000347">
    <property type="term" value="P:positive regulation of hepatocyte proliferation"/>
    <property type="evidence" value="ECO:0000250"/>
    <property type="project" value="UniProtKB"/>
</dbReference>
<dbReference type="GO" id="GO:0002690">
    <property type="term" value="P:positive regulation of leukocyte chemotaxis"/>
    <property type="evidence" value="ECO:0000250"/>
    <property type="project" value="UniProtKB"/>
</dbReference>
<dbReference type="GO" id="GO:0010976">
    <property type="term" value="P:positive regulation of neuron projection development"/>
    <property type="evidence" value="ECO:0000250"/>
    <property type="project" value="UniProtKB"/>
</dbReference>
<dbReference type="GO" id="GO:0048714">
    <property type="term" value="P:positive regulation of oligodendrocyte differentiation"/>
    <property type="evidence" value="ECO:0000250"/>
    <property type="project" value="UniProtKB"/>
</dbReference>
<dbReference type="GO" id="GO:0045778">
    <property type="term" value="P:positive regulation of ossification"/>
    <property type="evidence" value="ECO:0000250"/>
    <property type="project" value="UniProtKB"/>
</dbReference>
<dbReference type="GO" id="GO:2000738">
    <property type="term" value="P:positive regulation of stem cell differentiation"/>
    <property type="evidence" value="ECO:0000250"/>
    <property type="project" value="UniProtKB"/>
</dbReference>
<dbReference type="GO" id="GO:0043113">
    <property type="term" value="P:receptor clustering"/>
    <property type="evidence" value="ECO:0000250"/>
    <property type="project" value="UniProtKB"/>
</dbReference>
<dbReference type="GO" id="GO:0010594">
    <property type="term" value="P:regulation of endothelial cell migration"/>
    <property type="evidence" value="ECO:0000250"/>
    <property type="project" value="UniProtKB"/>
</dbReference>
<dbReference type="GO" id="GO:1903706">
    <property type="term" value="P:regulation of hemopoiesis"/>
    <property type="evidence" value="ECO:0000250"/>
    <property type="project" value="UniProtKB"/>
</dbReference>
<dbReference type="GO" id="GO:0031641">
    <property type="term" value="P:regulation of myelination"/>
    <property type="evidence" value="ECO:0000250"/>
    <property type="project" value="UniProtKB"/>
</dbReference>
<dbReference type="GO" id="GO:2000036">
    <property type="term" value="P:regulation of stem cell population maintenance"/>
    <property type="evidence" value="ECO:0000250"/>
    <property type="project" value="UniProtKB"/>
</dbReference>
<dbReference type="GO" id="GO:0048167">
    <property type="term" value="P:regulation of synaptic plasticity"/>
    <property type="evidence" value="ECO:0000250"/>
    <property type="project" value="UniProtKB"/>
</dbReference>
<dbReference type="GO" id="GO:0010996">
    <property type="term" value="P:response to auditory stimulus"/>
    <property type="evidence" value="ECO:0000250"/>
    <property type="project" value="UniProtKB"/>
</dbReference>
<dbReference type="GO" id="GO:0042246">
    <property type="term" value="P:tissue regeneration"/>
    <property type="evidence" value="ECO:0000250"/>
    <property type="project" value="UniProtKB"/>
</dbReference>
<dbReference type="FunFam" id="2.20.60.10:FF:000001">
    <property type="entry name" value="Pleiotrophin"/>
    <property type="match status" value="1"/>
</dbReference>
<dbReference type="FunFam" id="2.30.90.10:FF:000001">
    <property type="entry name" value="Pleiotrophin"/>
    <property type="match status" value="1"/>
</dbReference>
<dbReference type="Gene3D" id="2.30.90.10">
    <property type="entry name" value="Heparin-binding Growth Factor, Midkine, Chain A- C-terminal Domain"/>
    <property type="match status" value="1"/>
</dbReference>
<dbReference type="Gene3D" id="2.20.60.10">
    <property type="entry name" value="Pleiotrophin/Midkine, N-terminal domain"/>
    <property type="match status" value="1"/>
</dbReference>
<dbReference type="InterPro" id="IPR000762">
    <property type="entry name" value="Midkine_heparin-bd_GF"/>
</dbReference>
<dbReference type="InterPro" id="IPR020090">
    <property type="entry name" value="PTN/MK_C_dom"/>
</dbReference>
<dbReference type="InterPro" id="IPR038130">
    <property type="entry name" value="PTN/MK_C_dom_sf"/>
</dbReference>
<dbReference type="InterPro" id="IPR020091">
    <property type="entry name" value="PTN/MK_diS_sf"/>
</dbReference>
<dbReference type="InterPro" id="IPR020089">
    <property type="entry name" value="PTN/MK_N_dom"/>
</dbReference>
<dbReference type="InterPro" id="IPR037122">
    <property type="entry name" value="PTN/MK_N_dom_sf"/>
</dbReference>
<dbReference type="InterPro" id="IPR020092">
    <property type="entry name" value="PTN_MK_heparin-bd_GF_CS"/>
</dbReference>
<dbReference type="PANTHER" id="PTHR13850:SF1">
    <property type="entry name" value="PLEIOTROPHIN"/>
    <property type="match status" value="1"/>
</dbReference>
<dbReference type="PANTHER" id="PTHR13850">
    <property type="entry name" value="PLEIOTROPHIN FAMILY MEMBER"/>
    <property type="match status" value="1"/>
</dbReference>
<dbReference type="Pfam" id="PF01091">
    <property type="entry name" value="PTN_MK_C"/>
    <property type="match status" value="1"/>
</dbReference>
<dbReference type="Pfam" id="PF05196">
    <property type="entry name" value="PTN_MK_N"/>
    <property type="match status" value="1"/>
</dbReference>
<dbReference type="PRINTS" id="PR00269">
    <property type="entry name" value="PTNMIDKINE"/>
</dbReference>
<dbReference type="SMART" id="SM00193">
    <property type="entry name" value="PTN"/>
    <property type="match status" value="1"/>
</dbReference>
<dbReference type="SUPFAM" id="SSF57288">
    <property type="entry name" value="Midkine"/>
    <property type="match status" value="2"/>
</dbReference>
<dbReference type="PROSITE" id="PS00619">
    <property type="entry name" value="PTN_MK_1"/>
    <property type="match status" value="1"/>
</dbReference>
<dbReference type="PROSITE" id="PS00620">
    <property type="entry name" value="PTN_MK_2"/>
    <property type="match status" value="1"/>
</dbReference>
<accession>P79281</accession>
<feature type="signal peptide" evidence="4">
    <location>
        <begin position="1"/>
        <end position="32"/>
    </location>
</feature>
<feature type="chain" id="PRO_0000239426" description="Pleiotrophin">
    <location>
        <begin position="33"/>
        <end position="168"/>
    </location>
</feature>
<feature type="region of interest" description="Chondroitin sulfate binding" evidence="1">
    <location>
        <begin position="92"/>
        <end position="99"/>
    </location>
</feature>
<feature type="region of interest" description="Chondroitin sulfate binding" evidence="1">
    <location>
        <begin position="123"/>
        <end position="131"/>
    </location>
</feature>
<feature type="region of interest" description="Disordered" evidence="5">
    <location>
        <begin position="139"/>
        <end position="168"/>
    </location>
</feature>
<feature type="region of interest" description="Chondroitin sulfate A binding" evidence="1">
    <location>
        <begin position="147"/>
        <end position="168"/>
    </location>
</feature>
<feature type="disulfide bond" evidence="1">
    <location>
        <begin position="47"/>
        <end position="76"/>
    </location>
</feature>
<feature type="disulfide bond" evidence="1">
    <location>
        <begin position="55"/>
        <end position="85"/>
    </location>
</feature>
<feature type="disulfide bond" evidence="1">
    <location>
        <begin position="62"/>
        <end position="89"/>
    </location>
</feature>
<feature type="disulfide bond" evidence="1">
    <location>
        <begin position="99"/>
        <end position="131"/>
    </location>
</feature>
<feature type="disulfide bond" evidence="1">
    <location>
        <begin position="109"/>
        <end position="141"/>
    </location>
</feature>
<keyword id="KW-1015">Disulfide bond</keyword>
<keyword id="KW-0358">Heparin-binding</keyword>
<keyword id="KW-0497">Mitogen</keyword>
<keyword id="KW-1185">Reference proteome</keyword>
<keyword id="KW-0964">Secreted</keyword>
<keyword id="KW-0732">Signal</keyword>
<gene>
    <name evidence="1" type="primary">PTN</name>
</gene>
<comment type="function">
    <text evidence="1 2 3">Secreted growth factor that mediates its signal through cell-surface proteoglycan and non-proteoglycan receptors. Binds cell-surface proteoglycan receptor via their chondroitin sulfate (CS) groups. Thereby regulates many processes like cell proliferation, cell survival, cell growth, cell differentiation and cell migration in several tissues namely neuron and bone (By similarity). Also plays a role in synaptic plasticity and learning-related behavior by inhibiting long-term synaptic potentiation (By similarity). Binds PTPRZ1, leading to neutralization of the negative charges of the CS chains of PTPRZ1, inducing PTPRZ1 clustering, thereby causing the dimerization and inactivation of its phosphatase activity leading to increased tyrosine phosphorylation of each of the PTPRZ1 substrates like ALK, CTNNB1 or AFAP1L2 in order to activate the PI3K-AKT pathway. Through PTPRZ1 binding controls oligodendrocyte precursor cell differentiation by enhancing the phosphorylation of AFAP1L2 in order to activate the PI3K-AKT pathway. Forms a complex with PTPRZ1 and integrin alpha-V/beta-3 (ITGAV:ITGB3) that stimulates endothelial cell migration through SRC dephosphorylation and activation that consequently leads to ITGB3 'Tyr-773' phosphorylation (By similarity). In adult hippocampus promotes dendritic arborization, spine development, and functional integration and connectivity of newborn granule neurons through ALK by activating AKT signaling pathway (By similarity). Binds GPC2 and chondroitin sulfate proteoglycans (CSPGs) at the neuron surface, leading to abrogation of binding between PTPRS and CSPGs and neurite outgrowth promotion. Binds SDC3 and mediates bone formation by recruiting and attaching osteoblasts/osteoblast precursors to the sites for new bone deposition (By similarity). Binds ALK and promotes cell survival and cell proliferation through MAPK pathway activation (By similarity). Inhibits proliferation and enhances differentiation of neural stem cells by inhibiting FGF2-induced fibroblast growth factor receptor signaling pathway. Mediates regulatory mechanisms in normal hemostasis and in hematopoietic regeneration and in maintaining the balance of myeloid and lymphoid regeneration. In addition may play a role in the female reproductive system, auditory response and the progesterone-induced decidualization pathway (By similarity).</text>
</comment>
<comment type="subunit">
    <text evidence="1 3">Interacts with ALK and NEK6. Interacts with PTPRZ1 (via chondroitin sulfate groups); promotes formation of homooligomers; oligomerization impairs tyrosine phosphatase activity. Forms a complex with PTPRZ1 and CTNNB1; this complex inactivates PTPRZ1 protein tyrosine phosphatase activity through PTN interaction and stimulates tyrosine phosphorylation of CTNNB1. Interacts with ITGB3 and ITGA5. Forms a complex with PTPRZ1 and integrin alpha-V/beta-3 (ITGAV:ITGB3) that stimulates endothelial cell migration through ITGB3 'Tyr-773' phosphorylation (By similarity). Interacts with SDC3 (via heparan sulfate chains); this interaction mediates the neurite outgrowth-promoting signal from PTN to the cytoskeleton of growing neurites; this interaction mediates osteoblast recruitment. Interacts with GPC2 (via heparan sulfate); this interaction promotes neurite outgrowth through binding of PTN with chondroitin sulfate of proteoglycans, thereby releasing PTPRS of chondroitin sulfate proteoglycans (CSPGs) and leading to binding with heparan sulfate of GPC2 (By similarity).</text>
</comment>
<comment type="subcellular location">
    <subcellularLocation>
        <location evidence="1">Secreted</location>
    </subcellularLocation>
</comment>
<comment type="PTM">
    <text evidence="1">Phosphorylated by NEK6.</text>
</comment>
<comment type="similarity">
    <text evidence="7">Belongs to the pleiotrophin family.</text>
</comment>
<sequence>MQTPQFLQQRRKFAAAFLAFIFLLAVVDTAEAGKKEKPEKKVKKSDCGEWQWSVCVPTSGDCGLGTREGTRTGAECKQTMKTQRCKIPCNWKKQFGAECKYQFQAWGECDLNTALKTRTGSLKRALHNADCQKTVTISKPCGKVTKPKPQAESKKKKKEGKKQEKMLD</sequence>
<proteinExistence type="evidence at transcript level"/>
<organism>
    <name type="scientific">Sus scrofa</name>
    <name type="common">Pig</name>
    <dbReference type="NCBI Taxonomy" id="9823"/>
    <lineage>
        <taxon>Eukaryota</taxon>
        <taxon>Metazoa</taxon>
        <taxon>Chordata</taxon>
        <taxon>Craniata</taxon>
        <taxon>Vertebrata</taxon>
        <taxon>Euteleostomi</taxon>
        <taxon>Mammalia</taxon>
        <taxon>Eutheria</taxon>
        <taxon>Laurasiatheria</taxon>
        <taxon>Artiodactyla</taxon>
        <taxon>Suina</taxon>
        <taxon>Suidae</taxon>
        <taxon>Sus</taxon>
    </lineage>
</organism>
<evidence type="ECO:0000250" key="1">
    <source>
        <dbReference type="UniProtKB" id="P21246"/>
    </source>
</evidence>
<evidence type="ECO:0000250" key="2">
    <source>
        <dbReference type="UniProtKB" id="P63089"/>
    </source>
</evidence>
<evidence type="ECO:0000250" key="3">
    <source>
        <dbReference type="UniProtKB" id="P63090"/>
    </source>
</evidence>
<evidence type="ECO:0000255" key="4"/>
<evidence type="ECO:0000256" key="5">
    <source>
        <dbReference type="SAM" id="MobiDB-lite"/>
    </source>
</evidence>
<evidence type="ECO:0000303" key="6">
    <source ref="1"/>
</evidence>
<evidence type="ECO:0000305" key="7"/>
<reference key="1">
    <citation type="submission" date="1996-11" db="EMBL/GenBank/DDBJ databases">
        <title>Isolation of pig pleiotrophic factor beta.</title>
        <authorList>
            <person name="Tsujimura A."/>
            <person name="Yasojima K."/>
            <person name="Hashimoto T."/>
        </authorList>
    </citation>
    <scope>NUCLEOTIDE SEQUENCE [MRNA]</scope>
    <source>
        <tissue>Brain</tissue>
    </source>
</reference>
<protein>
    <recommendedName>
        <fullName evidence="1">Pleiotrophin</fullName>
        <shortName evidence="1">PTN</shortName>
    </recommendedName>
    <alternativeName>
        <fullName evidence="6">Pleiotrophic factor beta</fullName>
        <shortName evidence="6">PTF-beta</shortName>
    </alternativeName>
</protein>
<name>PTN_PIG</name>